<protein>
    <recommendedName>
        <fullName evidence="1">Phosphoserine aminotransferase</fullName>
        <ecNumber evidence="1">2.6.1.52</ecNumber>
    </recommendedName>
    <alternativeName>
        <fullName evidence="1">Phosphohydroxythreonine aminotransferase</fullName>
        <shortName evidence="1">PSAT</shortName>
    </alternativeName>
</protein>
<dbReference type="EC" id="2.6.1.52" evidence="1"/>
<dbReference type="EMBL" id="AE004439">
    <property type="protein sequence ID" value="AAK02921.1"/>
    <property type="molecule type" value="Genomic_DNA"/>
</dbReference>
<dbReference type="RefSeq" id="WP_005722605.1">
    <property type="nucleotide sequence ID" value="NC_002663.1"/>
</dbReference>
<dbReference type="SMR" id="P57881"/>
<dbReference type="STRING" id="272843.PM0837"/>
<dbReference type="EnsemblBacteria" id="AAK02921">
    <property type="protein sequence ID" value="AAK02921"/>
    <property type="gene ID" value="PM0837"/>
</dbReference>
<dbReference type="GeneID" id="77207736"/>
<dbReference type="KEGG" id="pmu:PM0837"/>
<dbReference type="PATRIC" id="fig|272843.6.peg.848"/>
<dbReference type="HOGENOM" id="CLU_034866_0_2_6"/>
<dbReference type="OrthoDB" id="9809412at2"/>
<dbReference type="UniPathway" id="UPA00135">
    <property type="reaction ID" value="UER00197"/>
</dbReference>
<dbReference type="UniPathway" id="UPA00244">
    <property type="reaction ID" value="UER00311"/>
</dbReference>
<dbReference type="Proteomes" id="UP000000809">
    <property type="component" value="Chromosome"/>
</dbReference>
<dbReference type="GO" id="GO:0005737">
    <property type="term" value="C:cytoplasm"/>
    <property type="evidence" value="ECO:0007669"/>
    <property type="project" value="UniProtKB-SubCell"/>
</dbReference>
<dbReference type="GO" id="GO:0004648">
    <property type="term" value="F:O-phospho-L-serine:2-oxoglutarate aminotransferase activity"/>
    <property type="evidence" value="ECO:0007669"/>
    <property type="project" value="UniProtKB-UniRule"/>
</dbReference>
<dbReference type="GO" id="GO:0030170">
    <property type="term" value="F:pyridoxal phosphate binding"/>
    <property type="evidence" value="ECO:0007669"/>
    <property type="project" value="UniProtKB-UniRule"/>
</dbReference>
<dbReference type="GO" id="GO:0006564">
    <property type="term" value="P:L-serine biosynthetic process"/>
    <property type="evidence" value="ECO:0007669"/>
    <property type="project" value="UniProtKB-UniRule"/>
</dbReference>
<dbReference type="GO" id="GO:0008615">
    <property type="term" value="P:pyridoxine biosynthetic process"/>
    <property type="evidence" value="ECO:0007669"/>
    <property type="project" value="UniProtKB-UniRule"/>
</dbReference>
<dbReference type="CDD" id="cd00611">
    <property type="entry name" value="PSAT_like"/>
    <property type="match status" value="1"/>
</dbReference>
<dbReference type="FunFam" id="3.40.640.10:FF:000010">
    <property type="entry name" value="Phosphoserine aminotransferase"/>
    <property type="match status" value="1"/>
</dbReference>
<dbReference type="FunFam" id="3.90.1150.10:FF:000006">
    <property type="entry name" value="Phosphoserine aminotransferase"/>
    <property type="match status" value="1"/>
</dbReference>
<dbReference type="Gene3D" id="3.90.1150.10">
    <property type="entry name" value="Aspartate Aminotransferase, domain 1"/>
    <property type="match status" value="1"/>
</dbReference>
<dbReference type="Gene3D" id="3.40.640.10">
    <property type="entry name" value="Type I PLP-dependent aspartate aminotransferase-like (Major domain)"/>
    <property type="match status" value="1"/>
</dbReference>
<dbReference type="HAMAP" id="MF_00160">
    <property type="entry name" value="SerC_aminotrans_5"/>
    <property type="match status" value="1"/>
</dbReference>
<dbReference type="InterPro" id="IPR000192">
    <property type="entry name" value="Aminotrans_V_dom"/>
</dbReference>
<dbReference type="InterPro" id="IPR020578">
    <property type="entry name" value="Aminotrans_V_PyrdxlP_BS"/>
</dbReference>
<dbReference type="InterPro" id="IPR022278">
    <property type="entry name" value="Pser_aminoTfrase"/>
</dbReference>
<dbReference type="InterPro" id="IPR015424">
    <property type="entry name" value="PyrdxlP-dep_Trfase"/>
</dbReference>
<dbReference type="InterPro" id="IPR015421">
    <property type="entry name" value="PyrdxlP-dep_Trfase_major"/>
</dbReference>
<dbReference type="InterPro" id="IPR015422">
    <property type="entry name" value="PyrdxlP-dep_Trfase_small"/>
</dbReference>
<dbReference type="NCBIfam" id="NF003764">
    <property type="entry name" value="PRK05355.1"/>
    <property type="match status" value="1"/>
</dbReference>
<dbReference type="NCBIfam" id="TIGR01364">
    <property type="entry name" value="serC_1"/>
    <property type="match status" value="1"/>
</dbReference>
<dbReference type="PANTHER" id="PTHR43247">
    <property type="entry name" value="PHOSPHOSERINE AMINOTRANSFERASE"/>
    <property type="match status" value="1"/>
</dbReference>
<dbReference type="PANTHER" id="PTHR43247:SF1">
    <property type="entry name" value="PHOSPHOSERINE AMINOTRANSFERASE"/>
    <property type="match status" value="1"/>
</dbReference>
<dbReference type="Pfam" id="PF00266">
    <property type="entry name" value="Aminotran_5"/>
    <property type="match status" value="1"/>
</dbReference>
<dbReference type="PIRSF" id="PIRSF000525">
    <property type="entry name" value="SerC"/>
    <property type="match status" value="1"/>
</dbReference>
<dbReference type="SUPFAM" id="SSF53383">
    <property type="entry name" value="PLP-dependent transferases"/>
    <property type="match status" value="1"/>
</dbReference>
<dbReference type="PROSITE" id="PS00595">
    <property type="entry name" value="AA_TRANSFER_CLASS_5"/>
    <property type="match status" value="1"/>
</dbReference>
<accession>P57881</accession>
<organism>
    <name type="scientific">Pasteurella multocida (strain Pm70)</name>
    <dbReference type="NCBI Taxonomy" id="272843"/>
    <lineage>
        <taxon>Bacteria</taxon>
        <taxon>Pseudomonadati</taxon>
        <taxon>Pseudomonadota</taxon>
        <taxon>Gammaproteobacteria</taxon>
        <taxon>Pasteurellales</taxon>
        <taxon>Pasteurellaceae</taxon>
        <taxon>Pasteurella</taxon>
    </lineage>
</organism>
<feature type="chain" id="PRO_0000150194" description="Phosphoserine aminotransferase">
    <location>
        <begin position="1"/>
        <end position="360"/>
    </location>
</feature>
<feature type="binding site" evidence="1">
    <location>
        <position position="42"/>
    </location>
    <ligand>
        <name>L-glutamate</name>
        <dbReference type="ChEBI" id="CHEBI:29985"/>
    </ligand>
</feature>
<feature type="binding site" evidence="1">
    <location>
        <begin position="76"/>
        <end position="77"/>
    </location>
    <ligand>
        <name>pyridoxal 5'-phosphate</name>
        <dbReference type="ChEBI" id="CHEBI:597326"/>
    </ligand>
</feature>
<feature type="binding site" evidence="1">
    <location>
        <position position="102"/>
    </location>
    <ligand>
        <name>pyridoxal 5'-phosphate</name>
        <dbReference type="ChEBI" id="CHEBI:597326"/>
    </ligand>
</feature>
<feature type="binding site" evidence="1">
    <location>
        <position position="152"/>
    </location>
    <ligand>
        <name>pyridoxal 5'-phosphate</name>
        <dbReference type="ChEBI" id="CHEBI:597326"/>
    </ligand>
</feature>
<feature type="binding site" evidence="1">
    <location>
        <position position="172"/>
    </location>
    <ligand>
        <name>pyridoxal 5'-phosphate</name>
        <dbReference type="ChEBI" id="CHEBI:597326"/>
    </ligand>
</feature>
<feature type="binding site" evidence="1">
    <location>
        <position position="195"/>
    </location>
    <ligand>
        <name>pyridoxal 5'-phosphate</name>
        <dbReference type="ChEBI" id="CHEBI:597326"/>
    </ligand>
</feature>
<feature type="binding site" evidence="1">
    <location>
        <begin position="237"/>
        <end position="238"/>
    </location>
    <ligand>
        <name>pyridoxal 5'-phosphate</name>
        <dbReference type="ChEBI" id="CHEBI:597326"/>
    </ligand>
</feature>
<feature type="modified residue" description="N6-(pyridoxal phosphate)lysine" evidence="1">
    <location>
        <position position="196"/>
    </location>
</feature>
<sequence length="360" mass="40059">MSKVFNFSAGPAMMPEAVLAQAQAELLNWQEQQTSVMEVSHRGKLFMALASQSELDLRQLYQIPDNYRILFLQGGARGQFAAIPMNLLKEKGKALYLTSGHWSATAAKEARLFGDIDEVNILEEGNELKIGQLDFSHIADQYDYVHYCPNETISGVEIFDLPKVGNAVLVADMSSNILSRKIDISQFGLIYAGAQKNLGPAGITLVIVREDLIGHARQTTPTIWNYEIQSKADSMINTPPTFAWYLCALVFKHLLSLGGIEEIEKRNQAKAQLLYDYLESTPFYRNPVAKVNRSRMNVTFTTDNDELNAKFVAEATAAGLHALKGHKVLGGMRASIYNAMPMEGVQALIAFMKQFEAENR</sequence>
<comment type="function">
    <text evidence="1">Catalyzes the reversible conversion of 3-phosphohydroxypyruvate to phosphoserine and of 3-hydroxy-2-oxo-4-phosphonooxybutanoate to phosphohydroxythreonine.</text>
</comment>
<comment type="catalytic activity">
    <reaction evidence="1">
        <text>O-phospho-L-serine + 2-oxoglutarate = 3-phosphooxypyruvate + L-glutamate</text>
        <dbReference type="Rhea" id="RHEA:14329"/>
        <dbReference type="ChEBI" id="CHEBI:16810"/>
        <dbReference type="ChEBI" id="CHEBI:18110"/>
        <dbReference type="ChEBI" id="CHEBI:29985"/>
        <dbReference type="ChEBI" id="CHEBI:57524"/>
        <dbReference type="EC" id="2.6.1.52"/>
    </reaction>
</comment>
<comment type="catalytic activity">
    <reaction evidence="1">
        <text>4-(phosphooxy)-L-threonine + 2-oxoglutarate = (R)-3-hydroxy-2-oxo-4-phosphooxybutanoate + L-glutamate</text>
        <dbReference type="Rhea" id="RHEA:16573"/>
        <dbReference type="ChEBI" id="CHEBI:16810"/>
        <dbReference type="ChEBI" id="CHEBI:29985"/>
        <dbReference type="ChEBI" id="CHEBI:58452"/>
        <dbReference type="ChEBI" id="CHEBI:58538"/>
        <dbReference type="EC" id="2.6.1.52"/>
    </reaction>
</comment>
<comment type="cofactor">
    <cofactor evidence="1">
        <name>pyridoxal 5'-phosphate</name>
        <dbReference type="ChEBI" id="CHEBI:597326"/>
    </cofactor>
    <text evidence="1">Binds 1 pyridoxal phosphate per subunit.</text>
</comment>
<comment type="pathway">
    <text evidence="1">Amino-acid biosynthesis; L-serine biosynthesis; L-serine from 3-phospho-D-glycerate: step 2/3.</text>
</comment>
<comment type="pathway">
    <text evidence="1">Cofactor biosynthesis; pyridoxine 5'-phosphate biosynthesis; pyridoxine 5'-phosphate from D-erythrose 4-phosphate: step 3/5.</text>
</comment>
<comment type="subunit">
    <text evidence="1">Homodimer.</text>
</comment>
<comment type="subcellular location">
    <subcellularLocation>
        <location evidence="1">Cytoplasm</location>
    </subcellularLocation>
</comment>
<comment type="similarity">
    <text evidence="1">Belongs to the class-V pyridoxal-phosphate-dependent aminotransferase family. SerC subfamily.</text>
</comment>
<proteinExistence type="inferred from homology"/>
<reference key="1">
    <citation type="journal article" date="2001" name="Proc. Natl. Acad. Sci. U.S.A.">
        <title>Complete genomic sequence of Pasteurella multocida Pm70.</title>
        <authorList>
            <person name="May B.J."/>
            <person name="Zhang Q."/>
            <person name="Li L.L."/>
            <person name="Paustian M.L."/>
            <person name="Whittam T.S."/>
            <person name="Kapur V."/>
        </authorList>
    </citation>
    <scope>NUCLEOTIDE SEQUENCE [LARGE SCALE GENOMIC DNA]</scope>
    <source>
        <strain>Pm70</strain>
    </source>
</reference>
<evidence type="ECO:0000255" key="1">
    <source>
        <dbReference type="HAMAP-Rule" id="MF_00160"/>
    </source>
</evidence>
<name>SERC_PASMU</name>
<gene>
    <name evidence="1" type="primary">serC</name>
    <name type="ordered locus">PM0837</name>
</gene>
<keyword id="KW-0028">Amino-acid biosynthesis</keyword>
<keyword id="KW-0032">Aminotransferase</keyword>
<keyword id="KW-0963">Cytoplasm</keyword>
<keyword id="KW-0663">Pyridoxal phosphate</keyword>
<keyword id="KW-0664">Pyridoxine biosynthesis</keyword>
<keyword id="KW-1185">Reference proteome</keyword>
<keyword id="KW-0718">Serine biosynthesis</keyword>
<keyword id="KW-0808">Transferase</keyword>